<organism>
    <name type="scientific">Homo sapiens</name>
    <name type="common">Human</name>
    <dbReference type="NCBI Taxonomy" id="9606"/>
    <lineage>
        <taxon>Eukaryota</taxon>
        <taxon>Metazoa</taxon>
        <taxon>Chordata</taxon>
        <taxon>Craniata</taxon>
        <taxon>Vertebrata</taxon>
        <taxon>Euteleostomi</taxon>
        <taxon>Mammalia</taxon>
        <taxon>Eutheria</taxon>
        <taxon>Euarchontoglires</taxon>
        <taxon>Primates</taxon>
        <taxon>Haplorrhini</taxon>
        <taxon>Catarrhini</taxon>
        <taxon>Hominidae</taxon>
        <taxon>Homo</taxon>
    </lineage>
</organism>
<gene>
    <name type="primary">SYCE1L</name>
</gene>
<keyword id="KW-0175">Coiled coil</keyword>
<keyword id="KW-0469">Meiosis</keyword>
<keyword id="KW-1267">Proteomics identification</keyword>
<keyword id="KW-1185">Reference proteome</keyword>
<proteinExistence type="evidence at protein level"/>
<protein>
    <recommendedName>
        <fullName>Synaptonemal complex central element protein 1-like</fullName>
    </recommendedName>
    <alternativeName>
        <fullName>Meiosis-related protein</fullName>
    </alternativeName>
</protein>
<sequence>MAGKLKPLNVEAPEATEEAEGQAKSLKTEDLLAMVIKLQKEGSLEPQIEDLISRINDLQQAKKKSSEELRETHSLWEALHRELDSLNGEKVHLEEVLGKKQEALRILQMHCQEKESEAQRLDVRGQLEDLMGQHKDLWEFHMLEQRLAREIRALERSKEQLLSERRLVRAKLREVERRLHSPPEVEGAMAVNDGLKAELEIFGEQVRSAPEVGAGEGEAGPELPRARDEEDPEPPVAAPDAL</sequence>
<reference key="1">
    <citation type="journal article" date="2004" name="Nature">
        <title>The sequence and analysis of duplication-rich human chromosome 16.</title>
        <authorList>
            <person name="Martin J."/>
            <person name="Han C."/>
            <person name="Gordon L.A."/>
            <person name="Terry A."/>
            <person name="Prabhakar S."/>
            <person name="She X."/>
            <person name="Xie G."/>
            <person name="Hellsten U."/>
            <person name="Chan Y.M."/>
            <person name="Altherr M."/>
            <person name="Couronne O."/>
            <person name="Aerts A."/>
            <person name="Bajorek E."/>
            <person name="Black S."/>
            <person name="Blumer H."/>
            <person name="Branscomb E."/>
            <person name="Brown N.C."/>
            <person name="Bruno W.J."/>
            <person name="Buckingham J.M."/>
            <person name="Callen D.F."/>
            <person name="Campbell C.S."/>
            <person name="Campbell M.L."/>
            <person name="Campbell E.W."/>
            <person name="Caoile C."/>
            <person name="Challacombe J.F."/>
            <person name="Chasteen L.A."/>
            <person name="Chertkov O."/>
            <person name="Chi H.C."/>
            <person name="Christensen M."/>
            <person name="Clark L.M."/>
            <person name="Cohn J.D."/>
            <person name="Denys M."/>
            <person name="Detter J.C."/>
            <person name="Dickson M."/>
            <person name="Dimitrijevic-Bussod M."/>
            <person name="Escobar J."/>
            <person name="Fawcett J.J."/>
            <person name="Flowers D."/>
            <person name="Fotopulos D."/>
            <person name="Glavina T."/>
            <person name="Gomez M."/>
            <person name="Gonzales E."/>
            <person name="Goodstein D."/>
            <person name="Goodwin L.A."/>
            <person name="Grady D.L."/>
            <person name="Grigoriev I."/>
            <person name="Groza M."/>
            <person name="Hammon N."/>
            <person name="Hawkins T."/>
            <person name="Haydu L."/>
            <person name="Hildebrand C.E."/>
            <person name="Huang W."/>
            <person name="Israni S."/>
            <person name="Jett J."/>
            <person name="Jewett P.B."/>
            <person name="Kadner K."/>
            <person name="Kimball H."/>
            <person name="Kobayashi A."/>
            <person name="Krawczyk M.-C."/>
            <person name="Leyba T."/>
            <person name="Longmire J.L."/>
            <person name="Lopez F."/>
            <person name="Lou Y."/>
            <person name="Lowry S."/>
            <person name="Ludeman T."/>
            <person name="Manohar C.F."/>
            <person name="Mark G.A."/>
            <person name="McMurray K.L."/>
            <person name="Meincke L.J."/>
            <person name="Morgan J."/>
            <person name="Moyzis R.K."/>
            <person name="Mundt M.O."/>
            <person name="Munk A.C."/>
            <person name="Nandkeshwar R.D."/>
            <person name="Pitluck S."/>
            <person name="Pollard M."/>
            <person name="Predki P."/>
            <person name="Parson-Quintana B."/>
            <person name="Ramirez L."/>
            <person name="Rash S."/>
            <person name="Retterer J."/>
            <person name="Ricke D.O."/>
            <person name="Robinson D.L."/>
            <person name="Rodriguez A."/>
            <person name="Salamov A."/>
            <person name="Saunders E.H."/>
            <person name="Scott D."/>
            <person name="Shough T."/>
            <person name="Stallings R.L."/>
            <person name="Stalvey M."/>
            <person name="Sutherland R.D."/>
            <person name="Tapia R."/>
            <person name="Tesmer J.G."/>
            <person name="Thayer N."/>
            <person name="Thompson L.S."/>
            <person name="Tice H."/>
            <person name="Torney D.C."/>
            <person name="Tran-Gyamfi M."/>
            <person name="Tsai M."/>
            <person name="Ulanovsky L.E."/>
            <person name="Ustaszewska A."/>
            <person name="Vo N."/>
            <person name="White P.S."/>
            <person name="Williams A.L."/>
            <person name="Wills P.L."/>
            <person name="Wu J.-R."/>
            <person name="Wu K."/>
            <person name="Yang J."/>
            <person name="DeJong P."/>
            <person name="Bruce D."/>
            <person name="Doggett N.A."/>
            <person name="Deaven L."/>
            <person name="Schmutz J."/>
            <person name="Grimwood J."/>
            <person name="Richardson P."/>
            <person name="Rokhsar D.S."/>
            <person name="Eichler E.E."/>
            <person name="Gilna P."/>
            <person name="Lucas S.M."/>
            <person name="Myers R.M."/>
            <person name="Rubin E.M."/>
            <person name="Pennacchio L.A."/>
        </authorList>
    </citation>
    <scope>NUCLEOTIDE SEQUENCE [LARGE SCALE GENOMIC DNA]</scope>
</reference>
<reference key="2">
    <citation type="journal article" date="2004" name="Genome Res.">
        <title>The status, quality, and expansion of the NIH full-length cDNA project: the Mammalian Gene Collection (MGC).</title>
        <authorList>
            <consortium name="The MGC Project Team"/>
        </authorList>
    </citation>
    <scope>NUCLEOTIDE SEQUENCE [LARGE SCALE MRNA] OF 31-218</scope>
</reference>
<comment type="function">
    <text evidence="1">May be involved in meiosis.</text>
</comment>
<comment type="similarity">
    <text evidence="4">Belongs to the SYCE family.</text>
</comment>
<feature type="chain" id="PRO_0000341221" description="Synaptonemal complex central element protein 1-like">
    <location>
        <begin position="1"/>
        <end position="242"/>
    </location>
</feature>
<feature type="region of interest" description="Disordered" evidence="3">
    <location>
        <begin position="1"/>
        <end position="24"/>
    </location>
</feature>
<feature type="region of interest" description="Disordered" evidence="3">
    <location>
        <begin position="206"/>
        <end position="242"/>
    </location>
</feature>
<feature type="coiled-coil region" evidence="2">
    <location>
        <begin position="44"/>
        <end position="181"/>
    </location>
</feature>
<evidence type="ECO:0000250" key="1"/>
<evidence type="ECO:0000255" key="2"/>
<evidence type="ECO:0000256" key="3">
    <source>
        <dbReference type="SAM" id="MobiDB-lite"/>
    </source>
</evidence>
<evidence type="ECO:0000305" key="4"/>
<accession>A8MT33</accession>
<accession>A6NF23</accession>
<name>SYC1L_HUMAN</name>
<dbReference type="EMBL" id="AC009139">
    <property type="status" value="NOT_ANNOTATED_CDS"/>
    <property type="molecule type" value="Genomic_DNA"/>
</dbReference>
<dbReference type="EMBL" id="DV080252">
    <property type="status" value="NOT_ANNOTATED_CDS"/>
    <property type="molecule type" value="mRNA"/>
</dbReference>
<dbReference type="CCDS" id="CCDS45533.1"/>
<dbReference type="RefSeq" id="NP_001123451.1">
    <property type="nucleotide sequence ID" value="NM_001129979.3"/>
</dbReference>
<dbReference type="SMR" id="A8MT33"/>
<dbReference type="BioGRID" id="935003">
    <property type="interactions" value="38"/>
</dbReference>
<dbReference type="FunCoup" id="A8MT33">
    <property type="interactions" value="19"/>
</dbReference>
<dbReference type="STRING" id="9606.ENSP00000367911"/>
<dbReference type="iPTMnet" id="A8MT33"/>
<dbReference type="PhosphoSitePlus" id="A8MT33"/>
<dbReference type="BioMuta" id="SYCE1L"/>
<dbReference type="jPOST" id="A8MT33"/>
<dbReference type="MassIVE" id="A8MT33"/>
<dbReference type="PaxDb" id="9606-ENSP00000367911"/>
<dbReference type="PeptideAtlas" id="A8MT33"/>
<dbReference type="ProteomicsDB" id="1993"/>
<dbReference type="Antibodypedia" id="67122">
    <property type="antibodies" value="55 antibodies from 10 providers"/>
</dbReference>
<dbReference type="DNASU" id="100130958"/>
<dbReference type="Ensembl" id="ENST00000378644.5">
    <property type="protein sequence ID" value="ENSP00000367911.4"/>
    <property type="gene ID" value="ENSG00000205078.6"/>
</dbReference>
<dbReference type="GeneID" id="100130958"/>
<dbReference type="KEGG" id="hsa:100130958"/>
<dbReference type="MANE-Select" id="ENST00000378644.5">
    <property type="protein sequence ID" value="ENSP00000367911.4"/>
    <property type="RefSeq nucleotide sequence ID" value="NM_001129979.3"/>
    <property type="RefSeq protein sequence ID" value="NP_001123451.1"/>
</dbReference>
<dbReference type="UCSC" id="uc010vnh.2">
    <property type="organism name" value="human"/>
</dbReference>
<dbReference type="AGR" id="HGNC:37236"/>
<dbReference type="CTD" id="100130958"/>
<dbReference type="DisGeNET" id="100130958"/>
<dbReference type="GeneCards" id="SYCE1L"/>
<dbReference type="HGNC" id="HGNC:37236">
    <property type="gene designation" value="SYCE1L"/>
</dbReference>
<dbReference type="HPA" id="ENSG00000205078">
    <property type="expression patterns" value="Tissue enhanced (testis)"/>
</dbReference>
<dbReference type="MIM" id="619954">
    <property type="type" value="gene"/>
</dbReference>
<dbReference type="neXtProt" id="NX_A8MT33"/>
<dbReference type="OpenTargets" id="ENSG00000205078"/>
<dbReference type="VEuPathDB" id="HostDB:ENSG00000205078"/>
<dbReference type="eggNOG" id="ENOG502QZY9">
    <property type="taxonomic scope" value="Eukaryota"/>
</dbReference>
<dbReference type="GeneTree" id="ENSGT00390000017352"/>
<dbReference type="HOGENOM" id="CLU_068366_1_0_1"/>
<dbReference type="InParanoid" id="A8MT33"/>
<dbReference type="OMA" id="QLHCQRK"/>
<dbReference type="OrthoDB" id="8931744at2759"/>
<dbReference type="PAN-GO" id="A8MT33">
    <property type="GO annotations" value="1 GO annotation based on evolutionary models"/>
</dbReference>
<dbReference type="PhylomeDB" id="A8MT33"/>
<dbReference type="PathwayCommons" id="A8MT33"/>
<dbReference type="BioGRID-ORCS" id="100130958">
    <property type="hits" value="9 hits in 1152 CRISPR screens"/>
</dbReference>
<dbReference type="ChiTaRS" id="SYCE1L">
    <property type="organism name" value="human"/>
</dbReference>
<dbReference type="GenomeRNAi" id="100130958"/>
<dbReference type="Pharos" id="A8MT33">
    <property type="development level" value="Tdark"/>
</dbReference>
<dbReference type="PRO" id="PR:A8MT33"/>
<dbReference type="Proteomes" id="UP000005640">
    <property type="component" value="Chromosome 16"/>
</dbReference>
<dbReference type="RNAct" id="A8MT33">
    <property type="molecule type" value="protein"/>
</dbReference>
<dbReference type="Bgee" id="ENSG00000205078">
    <property type="expression patterns" value="Expressed in primordial germ cell in gonad and 93 other cell types or tissues"/>
</dbReference>
<dbReference type="ExpressionAtlas" id="A8MT33">
    <property type="expression patterns" value="baseline and differential"/>
</dbReference>
<dbReference type="GO" id="GO:0045111">
    <property type="term" value="C:intermediate filament cytoskeleton"/>
    <property type="evidence" value="ECO:0000314"/>
    <property type="project" value="HPA"/>
</dbReference>
<dbReference type="GO" id="GO:0000795">
    <property type="term" value="C:synaptonemal complex"/>
    <property type="evidence" value="ECO:0000318"/>
    <property type="project" value="GO_Central"/>
</dbReference>
<dbReference type="GO" id="GO:0007130">
    <property type="term" value="P:synaptonemal complex assembly"/>
    <property type="evidence" value="ECO:0007669"/>
    <property type="project" value="InterPro"/>
</dbReference>
<dbReference type="InterPro" id="IPR026676">
    <property type="entry name" value="SYCE1"/>
</dbReference>
<dbReference type="PANTHER" id="PTHR21731">
    <property type="entry name" value="SYNAPTONEMAL COMPLEX CENTRAL ELEMENT PROTEIN 1-LIKE"/>
    <property type="match status" value="1"/>
</dbReference>
<dbReference type="PANTHER" id="PTHR21731:SF1">
    <property type="entry name" value="SYNAPTONEMAL COMPLEX CENTRAL ELEMENT PROTEIN 1-LIKE"/>
    <property type="match status" value="1"/>
</dbReference>
<dbReference type="Pfam" id="PF15233">
    <property type="entry name" value="SYCE1"/>
    <property type="match status" value="2"/>
</dbReference>